<keyword id="KW-0687">Ribonucleoprotein</keyword>
<keyword id="KW-0689">Ribosomal protein</keyword>
<keyword id="KW-0694">RNA-binding</keyword>
<keyword id="KW-0699">rRNA-binding</keyword>
<keyword id="KW-0820">tRNA-binding</keyword>
<organism>
    <name type="scientific">Parafrankia sp. (strain EAN1pec)</name>
    <dbReference type="NCBI Taxonomy" id="298653"/>
    <lineage>
        <taxon>Bacteria</taxon>
        <taxon>Bacillati</taxon>
        <taxon>Actinomycetota</taxon>
        <taxon>Actinomycetes</taxon>
        <taxon>Frankiales</taxon>
        <taxon>Frankiaceae</taxon>
        <taxon>Parafrankia</taxon>
    </lineage>
</organism>
<sequence length="138" mass="15555">MLIPRKVAHRKQHHPKRTGAAKGGTRIAFGEYAIQSLESAYVTNRQIESARIAMTRHIRRGGKVWINIYPDRPLTKKPAETRMGSGKGSPEWWVANVKPGRIMFELSGVAEPVAREAMRRAIHKLPMKCRFVTREGGA</sequence>
<evidence type="ECO:0000255" key="1">
    <source>
        <dbReference type="HAMAP-Rule" id="MF_01342"/>
    </source>
</evidence>
<evidence type="ECO:0000256" key="2">
    <source>
        <dbReference type="SAM" id="MobiDB-lite"/>
    </source>
</evidence>
<evidence type="ECO:0000305" key="3"/>
<gene>
    <name evidence="1" type="primary">rplP</name>
    <name type="ordered locus">Franean1_6042</name>
</gene>
<proteinExistence type="inferred from homology"/>
<reference key="1">
    <citation type="journal article" date="2007" name="Genome Res.">
        <title>Genome characteristics of facultatively symbiotic Frankia sp. strains reflect host range and host plant biogeography.</title>
        <authorList>
            <person name="Normand P."/>
            <person name="Lapierre P."/>
            <person name="Tisa L.S."/>
            <person name="Gogarten J.P."/>
            <person name="Alloisio N."/>
            <person name="Bagnarol E."/>
            <person name="Bassi C.A."/>
            <person name="Berry A.M."/>
            <person name="Bickhart D.M."/>
            <person name="Choisne N."/>
            <person name="Couloux A."/>
            <person name="Cournoyer B."/>
            <person name="Cruveiller S."/>
            <person name="Daubin V."/>
            <person name="Demange N."/>
            <person name="Francino M.P."/>
            <person name="Goltsman E."/>
            <person name="Huang Y."/>
            <person name="Kopp O.R."/>
            <person name="Labarre L."/>
            <person name="Lapidus A."/>
            <person name="Lavire C."/>
            <person name="Marechal J."/>
            <person name="Martinez M."/>
            <person name="Mastronunzio J.E."/>
            <person name="Mullin B.C."/>
            <person name="Niemann J."/>
            <person name="Pujic P."/>
            <person name="Rawnsley T."/>
            <person name="Rouy Z."/>
            <person name="Schenowitz C."/>
            <person name="Sellstedt A."/>
            <person name="Tavares F."/>
            <person name="Tomkins J.P."/>
            <person name="Vallenet D."/>
            <person name="Valverde C."/>
            <person name="Wall L.G."/>
            <person name="Wang Y."/>
            <person name="Medigue C."/>
            <person name="Benson D.R."/>
        </authorList>
    </citation>
    <scope>NUCLEOTIDE SEQUENCE [LARGE SCALE GENOMIC DNA]</scope>
    <source>
        <strain>EAN1pec</strain>
    </source>
</reference>
<protein>
    <recommendedName>
        <fullName evidence="1">Large ribosomal subunit protein uL16</fullName>
    </recommendedName>
    <alternativeName>
        <fullName evidence="3">50S ribosomal protein L16</fullName>
    </alternativeName>
</protein>
<dbReference type="EMBL" id="CP000820">
    <property type="protein sequence ID" value="ABW15386.1"/>
    <property type="molecule type" value="Genomic_DNA"/>
</dbReference>
<dbReference type="RefSeq" id="WP_018505125.1">
    <property type="nucleotide sequence ID" value="NC_009921.1"/>
</dbReference>
<dbReference type="SMR" id="A8LC49"/>
<dbReference type="STRING" id="298653.Franean1_6042"/>
<dbReference type="KEGG" id="fre:Franean1_6042"/>
<dbReference type="eggNOG" id="COG0197">
    <property type="taxonomic scope" value="Bacteria"/>
</dbReference>
<dbReference type="HOGENOM" id="CLU_078858_2_1_11"/>
<dbReference type="GO" id="GO:0022625">
    <property type="term" value="C:cytosolic large ribosomal subunit"/>
    <property type="evidence" value="ECO:0007669"/>
    <property type="project" value="TreeGrafter"/>
</dbReference>
<dbReference type="GO" id="GO:0019843">
    <property type="term" value="F:rRNA binding"/>
    <property type="evidence" value="ECO:0007669"/>
    <property type="project" value="UniProtKB-UniRule"/>
</dbReference>
<dbReference type="GO" id="GO:0003735">
    <property type="term" value="F:structural constituent of ribosome"/>
    <property type="evidence" value="ECO:0007669"/>
    <property type="project" value="InterPro"/>
</dbReference>
<dbReference type="GO" id="GO:0000049">
    <property type="term" value="F:tRNA binding"/>
    <property type="evidence" value="ECO:0007669"/>
    <property type="project" value="UniProtKB-KW"/>
</dbReference>
<dbReference type="GO" id="GO:0006412">
    <property type="term" value="P:translation"/>
    <property type="evidence" value="ECO:0007669"/>
    <property type="project" value="UniProtKB-UniRule"/>
</dbReference>
<dbReference type="CDD" id="cd01433">
    <property type="entry name" value="Ribosomal_L16_L10e"/>
    <property type="match status" value="1"/>
</dbReference>
<dbReference type="FunFam" id="3.90.1170.10:FF:000001">
    <property type="entry name" value="50S ribosomal protein L16"/>
    <property type="match status" value="1"/>
</dbReference>
<dbReference type="Gene3D" id="3.90.1170.10">
    <property type="entry name" value="Ribosomal protein L10e/L16"/>
    <property type="match status" value="1"/>
</dbReference>
<dbReference type="HAMAP" id="MF_01342">
    <property type="entry name" value="Ribosomal_uL16"/>
    <property type="match status" value="1"/>
</dbReference>
<dbReference type="InterPro" id="IPR047873">
    <property type="entry name" value="Ribosomal_uL16"/>
</dbReference>
<dbReference type="InterPro" id="IPR000114">
    <property type="entry name" value="Ribosomal_uL16_bact-type"/>
</dbReference>
<dbReference type="InterPro" id="IPR020798">
    <property type="entry name" value="Ribosomal_uL16_CS"/>
</dbReference>
<dbReference type="InterPro" id="IPR016180">
    <property type="entry name" value="Ribosomal_uL16_dom"/>
</dbReference>
<dbReference type="InterPro" id="IPR036920">
    <property type="entry name" value="Ribosomal_uL16_sf"/>
</dbReference>
<dbReference type="NCBIfam" id="TIGR01164">
    <property type="entry name" value="rplP_bact"/>
    <property type="match status" value="1"/>
</dbReference>
<dbReference type="PANTHER" id="PTHR12220">
    <property type="entry name" value="50S/60S RIBOSOMAL PROTEIN L16"/>
    <property type="match status" value="1"/>
</dbReference>
<dbReference type="PANTHER" id="PTHR12220:SF13">
    <property type="entry name" value="LARGE RIBOSOMAL SUBUNIT PROTEIN UL16M"/>
    <property type="match status" value="1"/>
</dbReference>
<dbReference type="Pfam" id="PF00252">
    <property type="entry name" value="Ribosomal_L16"/>
    <property type="match status" value="1"/>
</dbReference>
<dbReference type="PRINTS" id="PR00060">
    <property type="entry name" value="RIBOSOMALL16"/>
</dbReference>
<dbReference type="SUPFAM" id="SSF54686">
    <property type="entry name" value="Ribosomal protein L16p/L10e"/>
    <property type="match status" value="1"/>
</dbReference>
<dbReference type="PROSITE" id="PS00586">
    <property type="entry name" value="RIBOSOMAL_L16_1"/>
    <property type="match status" value="1"/>
</dbReference>
<dbReference type="PROSITE" id="PS00701">
    <property type="entry name" value="RIBOSOMAL_L16_2"/>
    <property type="match status" value="1"/>
</dbReference>
<comment type="function">
    <text evidence="1">Binds 23S rRNA and is also seen to make contacts with the A and possibly P site tRNAs.</text>
</comment>
<comment type="subunit">
    <text evidence="1">Part of the 50S ribosomal subunit.</text>
</comment>
<comment type="similarity">
    <text evidence="1">Belongs to the universal ribosomal protein uL16 family.</text>
</comment>
<name>RL16_PARS2</name>
<accession>A8LC49</accession>
<feature type="chain" id="PRO_1000142975" description="Large ribosomal subunit protein uL16">
    <location>
        <begin position="1"/>
        <end position="138"/>
    </location>
</feature>
<feature type="region of interest" description="Disordered" evidence="2">
    <location>
        <begin position="1"/>
        <end position="22"/>
    </location>
</feature>
<feature type="compositionally biased region" description="Basic residues" evidence="2">
    <location>
        <begin position="1"/>
        <end position="19"/>
    </location>
</feature>